<keyword id="KW-0325">Glycoprotein</keyword>
<keyword id="KW-0378">Hydrolase</keyword>
<keyword id="KW-0479">Metal-binding</keyword>
<keyword id="KW-0645">Protease</keyword>
<keyword id="KW-1185">Reference proteome</keyword>
<keyword id="KW-0964">Secreted</keyword>
<keyword id="KW-0732">Signal</keyword>
<keyword id="KW-0862">Zinc</keyword>
<name>P20D2_ASPCL</name>
<dbReference type="EC" id="3.4.17.-"/>
<dbReference type="EMBL" id="DS027049">
    <property type="protein sequence ID" value="EAW12891.1"/>
    <property type="molecule type" value="Genomic_DNA"/>
</dbReference>
<dbReference type="RefSeq" id="XP_001274317.1">
    <property type="nucleotide sequence ID" value="XM_001274316.1"/>
</dbReference>
<dbReference type="SMR" id="A1CAX3"/>
<dbReference type="STRING" id="344612.A1CAX3"/>
<dbReference type="EnsemblFungi" id="EAW12891">
    <property type="protein sequence ID" value="EAW12891"/>
    <property type="gene ID" value="ACLA_013260"/>
</dbReference>
<dbReference type="GeneID" id="4706375"/>
<dbReference type="KEGG" id="act:ACLA_013260"/>
<dbReference type="VEuPathDB" id="FungiDB:ACLA_013260"/>
<dbReference type="eggNOG" id="KOG2275">
    <property type="taxonomic scope" value="Eukaryota"/>
</dbReference>
<dbReference type="HOGENOM" id="CLU_021802_3_0_1"/>
<dbReference type="OMA" id="AWESVIF"/>
<dbReference type="OrthoDB" id="3064516at2759"/>
<dbReference type="Proteomes" id="UP000006701">
    <property type="component" value="Unassembled WGS sequence"/>
</dbReference>
<dbReference type="GO" id="GO:0005576">
    <property type="term" value="C:extracellular region"/>
    <property type="evidence" value="ECO:0007669"/>
    <property type="project" value="UniProtKB-SubCell"/>
</dbReference>
<dbReference type="GO" id="GO:0046872">
    <property type="term" value="F:metal ion binding"/>
    <property type="evidence" value="ECO:0007669"/>
    <property type="project" value="UniProtKB-KW"/>
</dbReference>
<dbReference type="GO" id="GO:0008233">
    <property type="term" value="F:peptidase activity"/>
    <property type="evidence" value="ECO:0007669"/>
    <property type="project" value="UniProtKB-KW"/>
</dbReference>
<dbReference type="GO" id="GO:0006508">
    <property type="term" value="P:proteolysis"/>
    <property type="evidence" value="ECO:0007669"/>
    <property type="project" value="UniProtKB-KW"/>
</dbReference>
<dbReference type="CDD" id="cd05652">
    <property type="entry name" value="M20_ArgE_DapE-like_fungal"/>
    <property type="match status" value="1"/>
</dbReference>
<dbReference type="Gene3D" id="3.30.70.360">
    <property type="match status" value="1"/>
</dbReference>
<dbReference type="Gene3D" id="3.40.630.10">
    <property type="entry name" value="Zn peptidases"/>
    <property type="match status" value="1"/>
</dbReference>
<dbReference type="InterPro" id="IPR001261">
    <property type="entry name" value="ArgE/DapE_CS"/>
</dbReference>
<dbReference type="InterPro" id="IPR036264">
    <property type="entry name" value="Bact_exopeptidase_dim_dom"/>
</dbReference>
<dbReference type="InterPro" id="IPR002933">
    <property type="entry name" value="Peptidase_M20"/>
</dbReference>
<dbReference type="InterPro" id="IPR011650">
    <property type="entry name" value="Peptidase_M20_dimer"/>
</dbReference>
<dbReference type="InterPro" id="IPR050072">
    <property type="entry name" value="Peptidase_M20A"/>
</dbReference>
<dbReference type="PANTHER" id="PTHR43808">
    <property type="entry name" value="ACETYLORNITHINE DEACETYLASE"/>
    <property type="match status" value="1"/>
</dbReference>
<dbReference type="PANTHER" id="PTHR43808:SF8">
    <property type="entry name" value="PEPTIDASE M20 DIMERISATION DOMAIN-CONTAINING PROTEIN"/>
    <property type="match status" value="1"/>
</dbReference>
<dbReference type="Pfam" id="PF07687">
    <property type="entry name" value="M20_dimer"/>
    <property type="match status" value="1"/>
</dbReference>
<dbReference type="Pfam" id="PF01546">
    <property type="entry name" value="Peptidase_M20"/>
    <property type="match status" value="1"/>
</dbReference>
<dbReference type="SUPFAM" id="SSF55031">
    <property type="entry name" value="Bacterial exopeptidase dimerisation domain"/>
    <property type="match status" value="1"/>
</dbReference>
<dbReference type="SUPFAM" id="SSF53187">
    <property type="entry name" value="Zn-dependent exopeptidases"/>
    <property type="match status" value="1"/>
</dbReference>
<dbReference type="PROSITE" id="PS00758">
    <property type="entry name" value="ARGE_DAPE_CPG2_1"/>
    <property type="match status" value="1"/>
</dbReference>
<dbReference type="PROSITE" id="PS00759">
    <property type="entry name" value="ARGE_DAPE_CPG2_2"/>
    <property type="match status" value="1"/>
</dbReference>
<organism>
    <name type="scientific">Aspergillus clavatus (strain ATCC 1007 / CBS 513.65 / DSM 816 / NCTC 3887 / NRRL 1 / QM 1276 / 107)</name>
    <dbReference type="NCBI Taxonomy" id="344612"/>
    <lineage>
        <taxon>Eukaryota</taxon>
        <taxon>Fungi</taxon>
        <taxon>Dikarya</taxon>
        <taxon>Ascomycota</taxon>
        <taxon>Pezizomycotina</taxon>
        <taxon>Eurotiomycetes</taxon>
        <taxon>Eurotiomycetidae</taxon>
        <taxon>Eurotiales</taxon>
        <taxon>Aspergillaceae</taxon>
        <taxon>Aspergillus</taxon>
        <taxon>Aspergillus subgen. Fumigati</taxon>
    </lineage>
</organism>
<gene>
    <name type="ORF">ACLA_013260</name>
</gene>
<protein>
    <recommendedName>
        <fullName>Probable carboxypeptidase ACLA_013260</fullName>
        <ecNumber>3.4.17.-</ecNumber>
    </recommendedName>
    <alternativeName>
        <fullName>Peptidase M20 domain-containing protein ACLA_013260</fullName>
    </alternativeName>
</protein>
<feature type="signal peptide" evidence="2">
    <location>
        <begin position="1"/>
        <end position="17"/>
    </location>
</feature>
<feature type="chain" id="PRO_0000411243" description="Probable carboxypeptidase ACLA_013260">
    <location>
        <begin position="18"/>
        <end position="415"/>
    </location>
</feature>
<feature type="active site" description="Proton acceptor" evidence="1">
    <location>
        <position position="177"/>
    </location>
</feature>
<feature type="binding site" evidence="1">
    <location>
        <position position="145"/>
    </location>
    <ligand>
        <name>Zn(2+)</name>
        <dbReference type="ChEBI" id="CHEBI:29105"/>
        <label>1</label>
    </ligand>
</feature>
<feature type="binding site" evidence="1">
    <location>
        <position position="145"/>
    </location>
    <ligand>
        <name>Zn(2+)</name>
        <dbReference type="ChEBI" id="CHEBI:29105"/>
        <label>2</label>
    </ligand>
</feature>
<feature type="binding site" evidence="1">
    <location>
        <position position="178"/>
    </location>
    <ligand>
        <name>Zn(2+)</name>
        <dbReference type="ChEBI" id="CHEBI:29105"/>
        <label>1</label>
    </ligand>
</feature>
<feature type="glycosylation site" description="N-linked (GlcNAc...) asparagine" evidence="2">
    <location>
        <position position="97"/>
    </location>
</feature>
<feature type="glycosylation site" description="N-linked (GlcNAc...) asparagine" evidence="2">
    <location>
        <position position="271"/>
    </location>
</feature>
<accession>A1CAX3</accession>
<sequence length="415" mass="44188">MKFPWLLLVKGAASVAAQKPLATSGSGQVLGTFNLEDIINASPLLSFHRDIVKIPSTTDNEYEVGQFIGDFLEQKHFTVEKQSISDSRFNVYAYQGNNSLPDILVTSHIDTVPPFLPYNLDYPILGGGHEFDRQSVLIAGRGTVDAKGSVAAQIFAVLEILEEKPDASIGLLFVVGEEKGGIGMETFSKNPSPSSFHTVIFGEPTGLNLVSGHKGVIGFNIKATGRAAHSGYPWLGKNAISALLPVASFTERLGEIPFQDGGLPSSLKYGNSTVNLGVIQGGVAVNVVPDSAEAIFSVRVAAGTPDESKSIITREVNKFTKNDPNIEVAFYPGGLSPTDLDTDVEGFDIITVNYGTDVPKLAIHGGGDRVVKRYLYGPGSILVAHGEDEALTVGDLEGAVQGYRVLIEKALSRDV</sequence>
<evidence type="ECO:0000250" key="1"/>
<evidence type="ECO:0000255" key="2"/>
<evidence type="ECO:0000305" key="3"/>
<reference key="1">
    <citation type="journal article" date="2008" name="PLoS Genet.">
        <title>Genomic islands in the pathogenic filamentous fungus Aspergillus fumigatus.</title>
        <authorList>
            <person name="Fedorova N.D."/>
            <person name="Khaldi N."/>
            <person name="Joardar V.S."/>
            <person name="Maiti R."/>
            <person name="Amedeo P."/>
            <person name="Anderson M.J."/>
            <person name="Crabtree J."/>
            <person name="Silva J.C."/>
            <person name="Badger J.H."/>
            <person name="Albarraq A."/>
            <person name="Angiuoli S."/>
            <person name="Bussey H."/>
            <person name="Bowyer P."/>
            <person name="Cotty P.J."/>
            <person name="Dyer P.S."/>
            <person name="Egan A."/>
            <person name="Galens K."/>
            <person name="Fraser-Liggett C.M."/>
            <person name="Haas B.J."/>
            <person name="Inman J.M."/>
            <person name="Kent R."/>
            <person name="Lemieux S."/>
            <person name="Malavazi I."/>
            <person name="Orvis J."/>
            <person name="Roemer T."/>
            <person name="Ronning C.M."/>
            <person name="Sundaram J.P."/>
            <person name="Sutton G."/>
            <person name="Turner G."/>
            <person name="Venter J.C."/>
            <person name="White O.R."/>
            <person name="Whitty B.R."/>
            <person name="Youngman P."/>
            <person name="Wolfe K.H."/>
            <person name="Goldman G.H."/>
            <person name="Wortman J.R."/>
            <person name="Jiang B."/>
            <person name="Denning D.W."/>
            <person name="Nierman W.C."/>
        </authorList>
    </citation>
    <scope>NUCLEOTIDE SEQUENCE [LARGE SCALE GENOMIC DNA]</scope>
    <source>
        <strain>ATCC 1007 / CBS 513.65 / DSM 816 / NCTC 3887 / NRRL 1 / QM 1276 / 107</strain>
    </source>
</reference>
<comment type="cofactor">
    <cofactor evidence="1">
        <name>Zn(2+)</name>
        <dbReference type="ChEBI" id="CHEBI:29105"/>
    </cofactor>
    <text evidence="1">Binds 2 Zn(2+) ions per subunit.</text>
</comment>
<comment type="subcellular location">
    <subcellularLocation>
        <location evidence="3">Secreted</location>
    </subcellularLocation>
</comment>
<comment type="similarity">
    <text evidence="3">Belongs to the peptidase M20A family.</text>
</comment>
<proteinExistence type="inferred from homology"/>